<accession>Q3YSU3</accession>
<dbReference type="EMBL" id="CP000107">
    <property type="protein sequence ID" value="AAZ68212.1"/>
    <property type="molecule type" value="Genomic_DNA"/>
</dbReference>
<dbReference type="RefSeq" id="WP_011304290.1">
    <property type="nucleotide sequence ID" value="NC_007354.1"/>
</dbReference>
<dbReference type="SMR" id="Q3YSU3"/>
<dbReference type="FunCoup" id="Q3YSU3">
    <property type="interactions" value="346"/>
</dbReference>
<dbReference type="STRING" id="269484.Ecaj_0161"/>
<dbReference type="KEGG" id="ecn:Ecaj_0161"/>
<dbReference type="eggNOG" id="COG0480">
    <property type="taxonomic scope" value="Bacteria"/>
</dbReference>
<dbReference type="HOGENOM" id="CLU_002794_4_1_5"/>
<dbReference type="InParanoid" id="Q3YSU3"/>
<dbReference type="Proteomes" id="UP000000435">
    <property type="component" value="Chromosome"/>
</dbReference>
<dbReference type="GO" id="GO:0005737">
    <property type="term" value="C:cytoplasm"/>
    <property type="evidence" value="ECO:0007669"/>
    <property type="project" value="UniProtKB-SubCell"/>
</dbReference>
<dbReference type="GO" id="GO:0005525">
    <property type="term" value="F:GTP binding"/>
    <property type="evidence" value="ECO:0007669"/>
    <property type="project" value="UniProtKB-UniRule"/>
</dbReference>
<dbReference type="GO" id="GO:0003924">
    <property type="term" value="F:GTPase activity"/>
    <property type="evidence" value="ECO:0007669"/>
    <property type="project" value="InterPro"/>
</dbReference>
<dbReference type="GO" id="GO:0003746">
    <property type="term" value="F:translation elongation factor activity"/>
    <property type="evidence" value="ECO:0007669"/>
    <property type="project" value="UniProtKB-UniRule"/>
</dbReference>
<dbReference type="GO" id="GO:0032790">
    <property type="term" value="P:ribosome disassembly"/>
    <property type="evidence" value="ECO:0007669"/>
    <property type="project" value="TreeGrafter"/>
</dbReference>
<dbReference type="CDD" id="cd01886">
    <property type="entry name" value="EF-G"/>
    <property type="match status" value="1"/>
</dbReference>
<dbReference type="CDD" id="cd16262">
    <property type="entry name" value="EFG_III"/>
    <property type="match status" value="1"/>
</dbReference>
<dbReference type="CDD" id="cd01434">
    <property type="entry name" value="EFG_mtEFG1_IV"/>
    <property type="match status" value="1"/>
</dbReference>
<dbReference type="CDD" id="cd03713">
    <property type="entry name" value="EFG_mtEFG_C"/>
    <property type="match status" value="1"/>
</dbReference>
<dbReference type="CDD" id="cd04088">
    <property type="entry name" value="EFG_mtEFG_II"/>
    <property type="match status" value="1"/>
</dbReference>
<dbReference type="FunFam" id="2.40.30.10:FF:000006">
    <property type="entry name" value="Elongation factor G"/>
    <property type="match status" value="1"/>
</dbReference>
<dbReference type="FunFam" id="3.30.230.10:FF:000003">
    <property type="entry name" value="Elongation factor G"/>
    <property type="match status" value="1"/>
</dbReference>
<dbReference type="FunFam" id="3.30.70.240:FF:000001">
    <property type="entry name" value="Elongation factor G"/>
    <property type="match status" value="1"/>
</dbReference>
<dbReference type="FunFam" id="3.30.70.870:FF:000001">
    <property type="entry name" value="Elongation factor G"/>
    <property type="match status" value="1"/>
</dbReference>
<dbReference type="FunFam" id="3.40.50.300:FF:000029">
    <property type="entry name" value="Elongation factor G"/>
    <property type="match status" value="1"/>
</dbReference>
<dbReference type="Gene3D" id="3.30.230.10">
    <property type="match status" value="1"/>
</dbReference>
<dbReference type="Gene3D" id="3.30.70.240">
    <property type="match status" value="1"/>
</dbReference>
<dbReference type="Gene3D" id="3.30.70.870">
    <property type="entry name" value="Elongation Factor G (Translational Gtpase), domain 3"/>
    <property type="match status" value="1"/>
</dbReference>
<dbReference type="Gene3D" id="3.40.50.300">
    <property type="entry name" value="P-loop containing nucleotide triphosphate hydrolases"/>
    <property type="match status" value="1"/>
</dbReference>
<dbReference type="Gene3D" id="2.40.30.10">
    <property type="entry name" value="Translation factors"/>
    <property type="match status" value="1"/>
</dbReference>
<dbReference type="HAMAP" id="MF_00054_B">
    <property type="entry name" value="EF_G_EF_2_B"/>
    <property type="match status" value="1"/>
</dbReference>
<dbReference type="InterPro" id="IPR053905">
    <property type="entry name" value="EF-G-like_DII"/>
</dbReference>
<dbReference type="InterPro" id="IPR041095">
    <property type="entry name" value="EFG_II"/>
</dbReference>
<dbReference type="InterPro" id="IPR009022">
    <property type="entry name" value="EFG_III"/>
</dbReference>
<dbReference type="InterPro" id="IPR035647">
    <property type="entry name" value="EFG_III/V"/>
</dbReference>
<dbReference type="InterPro" id="IPR047872">
    <property type="entry name" value="EFG_IV"/>
</dbReference>
<dbReference type="InterPro" id="IPR035649">
    <property type="entry name" value="EFG_V"/>
</dbReference>
<dbReference type="InterPro" id="IPR000640">
    <property type="entry name" value="EFG_V-like"/>
</dbReference>
<dbReference type="InterPro" id="IPR031157">
    <property type="entry name" value="G_TR_CS"/>
</dbReference>
<dbReference type="InterPro" id="IPR027417">
    <property type="entry name" value="P-loop_NTPase"/>
</dbReference>
<dbReference type="InterPro" id="IPR020568">
    <property type="entry name" value="Ribosomal_Su5_D2-typ_SF"/>
</dbReference>
<dbReference type="InterPro" id="IPR014721">
    <property type="entry name" value="Ribsml_uS5_D2-typ_fold_subgr"/>
</dbReference>
<dbReference type="InterPro" id="IPR005225">
    <property type="entry name" value="Small_GTP-bd"/>
</dbReference>
<dbReference type="InterPro" id="IPR000795">
    <property type="entry name" value="T_Tr_GTP-bd_dom"/>
</dbReference>
<dbReference type="InterPro" id="IPR009000">
    <property type="entry name" value="Transl_B-barrel_sf"/>
</dbReference>
<dbReference type="InterPro" id="IPR004540">
    <property type="entry name" value="Transl_elong_EFG/EF2"/>
</dbReference>
<dbReference type="InterPro" id="IPR005517">
    <property type="entry name" value="Transl_elong_EFG/EF2_IV"/>
</dbReference>
<dbReference type="NCBIfam" id="TIGR00484">
    <property type="entry name" value="EF-G"/>
    <property type="match status" value="1"/>
</dbReference>
<dbReference type="NCBIfam" id="NF009381">
    <property type="entry name" value="PRK12740.1-5"/>
    <property type="match status" value="1"/>
</dbReference>
<dbReference type="NCBIfam" id="TIGR00231">
    <property type="entry name" value="small_GTP"/>
    <property type="match status" value="1"/>
</dbReference>
<dbReference type="PANTHER" id="PTHR43261:SF1">
    <property type="entry name" value="RIBOSOME-RELEASING FACTOR 2, MITOCHONDRIAL"/>
    <property type="match status" value="1"/>
</dbReference>
<dbReference type="PANTHER" id="PTHR43261">
    <property type="entry name" value="TRANSLATION ELONGATION FACTOR G-RELATED"/>
    <property type="match status" value="1"/>
</dbReference>
<dbReference type="Pfam" id="PF22042">
    <property type="entry name" value="EF-G_D2"/>
    <property type="match status" value="1"/>
</dbReference>
<dbReference type="Pfam" id="PF00679">
    <property type="entry name" value="EFG_C"/>
    <property type="match status" value="1"/>
</dbReference>
<dbReference type="Pfam" id="PF14492">
    <property type="entry name" value="EFG_III"/>
    <property type="match status" value="1"/>
</dbReference>
<dbReference type="Pfam" id="PF03764">
    <property type="entry name" value="EFG_IV"/>
    <property type="match status" value="1"/>
</dbReference>
<dbReference type="Pfam" id="PF00009">
    <property type="entry name" value="GTP_EFTU"/>
    <property type="match status" value="1"/>
</dbReference>
<dbReference type="PRINTS" id="PR00315">
    <property type="entry name" value="ELONGATNFCT"/>
</dbReference>
<dbReference type="SMART" id="SM00838">
    <property type="entry name" value="EFG_C"/>
    <property type="match status" value="1"/>
</dbReference>
<dbReference type="SMART" id="SM00889">
    <property type="entry name" value="EFG_IV"/>
    <property type="match status" value="1"/>
</dbReference>
<dbReference type="SUPFAM" id="SSF54980">
    <property type="entry name" value="EF-G C-terminal domain-like"/>
    <property type="match status" value="2"/>
</dbReference>
<dbReference type="SUPFAM" id="SSF52540">
    <property type="entry name" value="P-loop containing nucleoside triphosphate hydrolases"/>
    <property type="match status" value="1"/>
</dbReference>
<dbReference type="SUPFAM" id="SSF54211">
    <property type="entry name" value="Ribosomal protein S5 domain 2-like"/>
    <property type="match status" value="1"/>
</dbReference>
<dbReference type="SUPFAM" id="SSF50447">
    <property type="entry name" value="Translation proteins"/>
    <property type="match status" value="1"/>
</dbReference>
<dbReference type="PROSITE" id="PS00301">
    <property type="entry name" value="G_TR_1"/>
    <property type="match status" value="1"/>
</dbReference>
<dbReference type="PROSITE" id="PS51722">
    <property type="entry name" value="G_TR_2"/>
    <property type="match status" value="1"/>
</dbReference>
<comment type="function">
    <text evidence="1">Catalyzes the GTP-dependent ribosomal translocation step during translation elongation. During this step, the ribosome changes from the pre-translocational (PRE) to the post-translocational (POST) state as the newly formed A-site-bound peptidyl-tRNA and P-site-bound deacylated tRNA move to the P and E sites, respectively. Catalyzes the coordinated movement of the two tRNA molecules, the mRNA and conformational changes in the ribosome.</text>
</comment>
<comment type="subcellular location">
    <subcellularLocation>
        <location evidence="1">Cytoplasm</location>
    </subcellularLocation>
</comment>
<comment type="similarity">
    <text evidence="1">Belongs to the TRAFAC class translation factor GTPase superfamily. Classic translation factor GTPase family. EF-G/EF-2 subfamily.</text>
</comment>
<keyword id="KW-0963">Cytoplasm</keyword>
<keyword id="KW-0251">Elongation factor</keyword>
<keyword id="KW-0342">GTP-binding</keyword>
<keyword id="KW-0547">Nucleotide-binding</keyword>
<keyword id="KW-0648">Protein biosynthesis</keyword>
<evidence type="ECO:0000255" key="1">
    <source>
        <dbReference type="HAMAP-Rule" id="MF_00054"/>
    </source>
</evidence>
<protein>
    <recommendedName>
        <fullName evidence="1">Elongation factor G</fullName>
        <shortName evidence="1">EF-G</shortName>
    </recommendedName>
</protein>
<organism>
    <name type="scientific">Ehrlichia canis (strain Jake)</name>
    <dbReference type="NCBI Taxonomy" id="269484"/>
    <lineage>
        <taxon>Bacteria</taxon>
        <taxon>Pseudomonadati</taxon>
        <taxon>Pseudomonadota</taxon>
        <taxon>Alphaproteobacteria</taxon>
        <taxon>Rickettsiales</taxon>
        <taxon>Anaplasmataceae</taxon>
        <taxon>Ehrlichia</taxon>
    </lineage>
</organism>
<proteinExistence type="inferred from homology"/>
<feature type="chain" id="PRO_0000225211" description="Elongation factor G">
    <location>
        <begin position="1"/>
        <end position="690"/>
    </location>
</feature>
<feature type="domain" description="tr-type G">
    <location>
        <begin position="8"/>
        <end position="283"/>
    </location>
</feature>
<feature type="binding site" evidence="1">
    <location>
        <begin position="17"/>
        <end position="24"/>
    </location>
    <ligand>
        <name>GTP</name>
        <dbReference type="ChEBI" id="CHEBI:37565"/>
    </ligand>
</feature>
<feature type="binding site" evidence="1">
    <location>
        <begin position="81"/>
        <end position="85"/>
    </location>
    <ligand>
        <name>GTP</name>
        <dbReference type="ChEBI" id="CHEBI:37565"/>
    </ligand>
</feature>
<feature type="binding site" evidence="1">
    <location>
        <begin position="135"/>
        <end position="138"/>
    </location>
    <ligand>
        <name>GTP</name>
        <dbReference type="ChEBI" id="CHEBI:37565"/>
    </ligand>
</feature>
<sequence>MNIDNELSKCRNIGIMAHIDAGKTTTTERILFYTGKQNRIGEVHEGAASMDWMEQEKERGITITSAATTCFWNGHRINIIDTPGHVDFTIEVERSLRVLDGAVAVFDGVAGVEPQSETVWRQADKYNVPRICFMNKMDRMGADFYRCVDMLVDRLGATPLVLQLPIGSEKDFVGVVDLLEMRSIIWDEDSLGASFHYGEIPKDMIDKAQEYRNKLLESAVELNDEAMNLYFEGKEISVSLLKSCIRTGVIQSKFVPVLCGSAFKNRGVQPLLDAVVDFLPAPNDIPVIEALDVKTSNTINVKTSAGGKFVALAFKVMTDKFVGSLTFIRIYSGKLSSKTTVLNAVKDSTESIGRILLMHANNREDITEAQAGDIVALAGLKKTVTGDTLCALDYPVILERMEFPEPVMEIAVEPKSTADQEKMGIALSRLVAEDPSLGMYVNPESGQTILKGMGELHLEVIVDRMRREFNVEANIGAPQVAYRETITKSVEIEYIHKKQTGGAGQFAKVNILFEPLPPGSGFQFESKITGGAIPKEYIPGVQSGLENIRGSGMLAGFPVIDFKATLFDGAFHEVDSSPLAFELAAKGAFRDMVNKAGAILLEPIMKVEIITPDEYMGDVIGDINSRRGRVAEMQDRHNTKVILAFIPLAKMFGYVKDLRSMSQGRAQYSMYFSCYEQVPDNIVANEIKTK</sequence>
<gene>
    <name evidence="1" type="primary">fusA</name>
    <name type="ordered locus">Ecaj_0161</name>
</gene>
<reference key="1">
    <citation type="journal article" date="2006" name="J. Bacteriol.">
        <title>The genome of the obligately intracellular bacterium Ehrlichia canis reveals themes of complex membrane structure and immune evasion strategies.</title>
        <authorList>
            <person name="Mavromatis K."/>
            <person name="Doyle C.K."/>
            <person name="Lykidis A."/>
            <person name="Ivanova N."/>
            <person name="Francino M.P."/>
            <person name="Chain P."/>
            <person name="Shin M."/>
            <person name="Malfatti S."/>
            <person name="Larimer F."/>
            <person name="Copeland A."/>
            <person name="Detter J.C."/>
            <person name="Land M."/>
            <person name="Richardson P.M."/>
            <person name="Yu X.J."/>
            <person name="Walker D.H."/>
            <person name="McBride J.W."/>
            <person name="Kyrpides N.C."/>
        </authorList>
    </citation>
    <scope>NUCLEOTIDE SEQUENCE [LARGE SCALE GENOMIC DNA]</scope>
    <source>
        <strain>Jake</strain>
    </source>
</reference>
<name>EFG_EHRCJ</name>